<keyword id="KW-0963">Cytoplasm</keyword>
<keyword id="KW-0378">Hydrolase</keyword>
<keyword id="KW-0479">Metal-binding</keyword>
<keyword id="KW-0547">Nucleotide-binding</keyword>
<proteinExistence type="inferred from homology"/>
<sequence>MRILVSNDDGFHAEGIQVLATELRKIAEVIVVAPDRNRSAASSSLTLVEPLRPRHLDNGDYCVNGTPADCVYLALNGFLSGQVDLVVSGINAGCNMGDDTIYSGTLAAALEGRHLGLPAIAVSLDGRQHYETAARVVCDLIPKLHHQLLNPREIININVPDLPFEELKGYKVCRLGYRASSAEVIKQKDPRDETIYWIGPSALPEDESEGTDFYAVKNGYVSITPIQADLTAYHSLLSLQNWLEQEFTK</sequence>
<name>SURE_HAEIG</name>
<protein>
    <recommendedName>
        <fullName evidence="1">5'-nucleotidase SurE</fullName>
        <ecNumber evidence="1">3.1.3.5</ecNumber>
    </recommendedName>
    <alternativeName>
        <fullName evidence="1">Nucleoside 5'-monophosphate phosphohydrolase</fullName>
    </alternativeName>
</protein>
<accession>A5UHI7</accession>
<feature type="chain" id="PRO_1000007734" description="5'-nucleotidase SurE">
    <location>
        <begin position="1"/>
        <end position="249"/>
    </location>
</feature>
<feature type="binding site" evidence="1">
    <location>
        <position position="8"/>
    </location>
    <ligand>
        <name>a divalent metal cation</name>
        <dbReference type="ChEBI" id="CHEBI:60240"/>
    </ligand>
</feature>
<feature type="binding site" evidence="1">
    <location>
        <position position="9"/>
    </location>
    <ligand>
        <name>a divalent metal cation</name>
        <dbReference type="ChEBI" id="CHEBI:60240"/>
    </ligand>
</feature>
<feature type="binding site" evidence="1">
    <location>
        <position position="39"/>
    </location>
    <ligand>
        <name>a divalent metal cation</name>
        <dbReference type="ChEBI" id="CHEBI:60240"/>
    </ligand>
</feature>
<feature type="binding site" evidence="1">
    <location>
        <position position="91"/>
    </location>
    <ligand>
        <name>a divalent metal cation</name>
        <dbReference type="ChEBI" id="CHEBI:60240"/>
    </ligand>
</feature>
<reference key="1">
    <citation type="journal article" date="2007" name="Genome Biol.">
        <title>Characterization and modeling of the Haemophilus influenzae core and supragenomes based on the complete genomic sequences of Rd and 12 clinical nontypeable strains.</title>
        <authorList>
            <person name="Hogg J.S."/>
            <person name="Hu F.Z."/>
            <person name="Janto B."/>
            <person name="Boissy R."/>
            <person name="Hayes J."/>
            <person name="Keefe R."/>
            <person name="Post J.C."/>
            <person name="Ehrlich G.D."/>
        </authorList>
    </citation>
    <scope>NUCLEOTIDE SEQUENCE [LARGE SCALE GENOMIC DNA]</scope>
    <source>
        <strain>PittGG</strain>
    </source>
</reference>
<organism>
    <name type="scientific">Haemophilus influenzae (strain PittGG)</name>
    <dbReference type="NCBI Taxonomy" id="374931"/>
    <lineage>
        <taxon>Bacteria</taxon>
        <taxon>Pseudomonadati</taxon>
        <taxon>Pseudomonadota</taxon>
        <taxon>Gammaproteobacteria</taxon>
        <taxon>Pasteurellales</taxon>
        <taxon>Pasteurellaceae</taxon>
        <taxon>Haemophilus</taxon>
    </lineage>
</organism>
<dbReference type="EC" id="3.1.3.5" evidence="1"/>
<dbReference type="EMBL" id="CP000672">
    <property type="protein sequence ID" value="ABR00243.1"/>
    <property type="molecule type" value="Genomic_DNA"/>
</dbReference>
<dbReference type="SMR" id="A5UHI7"/>
<dbReference type="KEGG" id="hiq:CGSHiGG_06805"/>
<dbReference type="HOGENOM" id="CLU_045192_1_2_6"/>
<dbReference type="Proteomes" id="UP000001990">
    <property type="component" value="Chromosome"/>
</dbReference>
<dbReference type="GO" id="GO:0005737">
    <property type="term" value="C:cytoplasm"/>
    <property type="evidence" value="ECO:0007669"/>
    <property type="project" value="UniProtKB-SubCell"/>
</dbReference>
<dbReference type="GO" id="GO:0008254">
    <property type="term" value="F:3'-nucleotidase activity"/>
    <property type="evidence" value="ECO:0007669"/>
    <property type="project" value="TreeGrafter"/>
</dbReference>
<dbReference type="GO" id="GO:0008253">
    <property type="term" value="F:5'-nucleotidase activity"/>
    <property type="evidence" value="ECO:0007669"/>
    <property type="project" value="UniProtKB-UniRule"/>
</dbReference>
<dbReference type="GO" id="GO:0004309">
    <property type="term" value="F:exopolyphosphatase activity"/>
    <property type="evidence" value="ECO:0007669"/>
    <property type="project" value="TreeGrafter"/>
</dbReference>
<dbReference type="GO" id="GO:0046872">
    <property type="term" value="F:metal ion binding"/>
    <property type="evidence" value="ECO:0007669"/>
    <property type="project" value="UniProtKB-UniRule"/>
</dbReference>
<dbReference type="GO" id="GO:0000166">
    <property type="term" value="F:nucleotide binding"/>
    <property type="evidence" value="ECO:0007669"/>
    <property type="project" value="UniProtKB-KW"/>
</dbReference>
<dbReference type="FunFam" id="3.40.1210.10:FF:000001">
    <property type="entry name" value="5'/3'-nucleotidase SurE"/>
    <property type="match status" value="1"/>
</dbReference>
<dbReference type="Gene3D" id="3.40.1210.10">
    <property type="entry name" value="Survival protein SurE-like phosphatase/nucleotidase"/>
    <property type="match status" value="1"/>
</dbReference>
<dbReference type="HAMAP" id="MF_00060">
    <property type="entry name" value="SurE"/>
    <property type="match status" value="1"/>
</dbReference>
<dbReference type="InterPro" id="IPR030048">
    <property type="entry name" value="SurE"/>
</dbReference>
<dbReference type="InterPro" id="IPR002828">
    <property type="entry name" value="SurE-like_Pase/nucleotidase"/>
</dbReference>
<dbReference type="InterPro" id="IPR036523">
    <property type="entry name" value="SurE-like_sf"/>
</dbReference>
<dbReference type="NCBIfam" id="NF001489">
    <property type="entry name" value="PRK00346.1-3"/>
    <property type="match status" value="1"/>
</dbReference>
<dbReference type="NCBIfam" id="NF001490">
    <property type="entry name" value="PRK00346.1-4"/>
    <property type="match status" value="1"/>
</dbReference>
<dbReference type="NCBIfam" id="TIGR00087">
    <property type="entry name" value="surE"/>
    <property type="match status" value="1"/>
</dbReference>
<dbReference type="PANTHER" id="PTHR30457">
    <property type="entry name" value="5'-NUCLEOTIDASE SURE"/>
    <property type="match status" value="1"/>
</dbReference>
<dbReference type="PANTHER" id="PTHR30457:SF12">
    <property type="entry name" value="5'_3'-NUCLEOTIDASE SURE"/>
    <property type="match status" value="1"/>
</dbReference>
<dbReference type="Pfam" id="PF01975">
    <property type="entry name" value="SurE"/>
    <property type="match status" value="1"/>
</dbReference>
<dbReference type="SUPFAM" id="SSF64167">
    <property type="entry name" value="SurE-like"/>
    <property type="match status" value="1"/>
</dbReference>
<comment type="function">
    <text evidence="1">Nucleotidase that shows phosphatase activity on nucleoside 5'-monophosphates.</text>
</comment>
<comment type="catalytic activity">
    <reaction evidence="1">
        <text>a ribonucleoside 5'-phosphate + H2O = a ribonucleoside + phosphate</text>
        <dbReference type="Rhea" id="RHEA:12484"/>
        <dbReference type="ChEBI" id="CHEBI:15377"/>
        <dbReference type="ChEBI" id="CHEBI:18254"/>
        <dbReference type="ChEBI" id="CHEBI:43474"/>
        <dbReference type="ChEBI" id="CHEBI:58043"/>
        <dbReference type="EC" id="3.1.3.5"/>
    </reaction>
</comment>
<comment type="cofactor">
    <cofactor evidence="1">
        <name>a divalent metal cation</name>
        <dbReference type="ChEBI" id="CHEBI:60240"/>
    </cofactor>
    <text evidence="1">Binds 1 divalent metal cation per subunit.</text>
</comment>
<comment type="subcellular location">
    <subcellularLocation>
        <location evidence="1">Cytoplasm</location>
    </subcellularLocation>
</comment>
<comment type="similarity">
    <text evidence="1">Belongs to the SurE nucleotidase family.</text>
</comment>
<gene>
    <name evidence="1" type="primary">surE</name>
    <name type="ordered locus">CGSHiGG_06805</name>
</gene>
<evidence type="ECO:0000255" key="1">
    <source>
        <dbReference type="HAMAP-Rule" id="MF_00060"/>
    </source>
</evidence>